<evidence type="ECO:0000255" key="1">
    <source>
        <dbReference type="HAMAP-Rule" id="MF_00672"/>
    </source>
</evidence>
<gene>
    <name evidence="1" type="primary">yihY</name>
    <name type="ordered locus">E2348C_4187</name>
</gene>
<keyword id="KW-0997">Cell inner membrane</keyword>
<keyword id="KW-1003">Cell membrane</keyword>
<keyword id="KW-0472">Membrane</keyword>
<keyword id="KW-1185">Reference proteome</keyword>
<keyword id="KW-0812">Transmembrane</keyword>
<keyword id="KW-1133">Transmembrane helix</keyword>
<protein>
    <recommendedName>
        <fullName evidence="1">UPF0761 membrane protein YihY</fullName>
    </recommendedName>
</protein>
<name>YIHY_ECO27</name>
<dbReference type="EMBL" id="FM180568">
    <property type="protein sequence ID" value="CAS11735.1"/>
    <property type="molecule type" value="Genomic_DNA"/>
</dbReference>
<dbReference type="RefSeq" id="WP_000920747.1">
    <property type="nucleotide sequence ID" value="NC_011601.1"/>
</dbReference>
<dbReference type="KEGG" id="ecg:E2348C_4187"/>
<dbReference type="HOGENOM" id="CLU_032288_0_0_6"/>
<dbReference type="Proteomes" id="UP000008205">
    <property type="component" value="Chromosome"/>
</dbReference>
<dbReference type="GO" id="GO:0005886">
    <property type="term" value="C:plasma membrane"/>
    <property type="evidence" value="ECO:0007669"/>
    <property type="project" value="UniProtKB-SubCell"/>
</dbReference>
<dbReference type="HAMAP" id="MF_00672">
    <property type="entry name" value="UPF0761"/>
    <property type="match status" value="1"/>
</dbReference>
<dbReference type="InterPro" id="IPR023679">
    <property type="entry name" value="UPF0761_bac"/>
</dbReference>
<dbReference type="InterPro" id="IPR017039">
    <property type="entry name" value="Virul_fac_BrkB"/>
</dbReference>
<dbReference type="NCBIfam" id="NF002457">
    <property type="entry name" value="PRK01637.1"/>
    <property type="match status" value="1"/>
</dbReference>
<dbReference type="NCBIfam" id="TIGR00765">
    <property type="entry name" value="yihY_not_rbn"/>
    <property type="match status" value="1"/>
</dbReference>
<dbReference type="PANTHER" id="PTHR30213">
    <property type="entry name" value="INNER MEMBRANE PROTEIN YHJD"/>
    <property type="match status" value="1"/>
</dbReference>
<dbReference type="PANTHER" id="PTHR30213:SF0">
    <property type="entry name" value="UPF0761 MEMBRANE PROTEIN YIHY"/>
    <property type="match status" value="1"/>
</dbReference>
<dbReference type="Pfam" id="PF03631">
    <property type="entry name" value="Virul_fac_BrkB"/>
    <property type="match status" value="1"/>
</dbReference>
<dbReference type="PIRSF" id="PIRSF035875">
    <property type="entry name" value="RNase_BN"/>
    <property type="match status" value="1"/>
</dbReference>
<organism>
    <name type="scientific">Escherichia coli O127:H6 (strain E2348/69 / EPEC)</name>
    <dbReference type="NCBI Taxonomy" id="574521"/>
    <lineage>
        <taxon>Bacteria</taxon>
        <taxon>Pseudomonadati</taxon>
        <taxon>Pseudomonadota</taxon>
        <taxon>Gammaproteobacteria</taxon>
        <taxon>Enterobacterales</taxon>
        <taxon>Enterobacteriaceae</taxon>
        <taxon>Escherichia</taxon>
    </lineage>
</organism>
<reference key="1">
    <citation type="journal article" date="2009" name="J. Bacteriol.">
        <title>Complete genome sequence and comparative genome analysis of enteropathogenic Escherichia coli O127:H6 strain E2348/69.</title>
        <authorList>
            <person name="Iguchi A."/>
            <person name="Thomson N.R."/>
            <person name="Ogura Y."/>
            <person name="Saunders D."/>
            <person name="Ooka T."/>
            <person name="Henderson I.R."/>
            <person name="Harris D."/>
            <person name="Asadulghani M."/>
            <person name="Kurokawa K."/>
            <person name="Dean P."/>
            <person name="Kenny B."/>
            <person name="Quail M.A."/>
            <person name="Thurston S."/>
            <person name="Dougan G."/>
            <person name="Hayashi T."/>
            <person name="Parkhill J."/>
            <person name="Frankel G."/>
        </authorList>
    </citation>
    <scope>NUCLEOTIDE SEQUENCE [LARGE SCALE GENOMIC DNA]</scope>
    <source>
        <strain>E2348/69 / EPEC</strain>
    </source>
</reference>
<comment type="subcellular location">
    <subcellularLocation>
        <location evidence="1">Cell inner membrane</location>
        <topology evidence="1">Multi-pass membrane protein</topology>
    </subcellularLocation>
</comment>
<comment type="similarity">
    <text evidence="1">Belongs to the UPF0761 family.</text>
</comment>
<sequence length="290" mass="32811">MLKTIQDKAKHRTRPLWAWLKLLWQRIDEDNMTTLAGNLAYVSLLSLVPLVAVVFALFAAFPMFSDVSIQLRHFIFANFLPATGDVIQRYIEQFVANSNKMTAVGACGLIVTALLLMYSIDSALNTIWRSKRARPKIYSFAVYWMILTLGPLLAGASLAISSYLLSLRWASDLNTVIDNVLRIFPLLLSWISFWLLYSIVPTIRVPNRDAIVGAFVAALLFEAGKKGFALYITMFPSYQLIYGVLAVIPILFVWVYWTWCIVLLGAEITVTLGEYRKLKQAAEQEEDDEP</sequence>
<accession>B7UNK3</accession>
<proteinExistence type="inferred from homology"/>
<feature type="chain" id="PRO_1000147667" description="UPF0761 membrane protein YihY">
    <location>
        <begin position="1"/>
        <end position="290"/>
    </location>
</feature>
<feature type="transmembrane region" description="Helical" evidence="1">
    <location>
        <begin position="44"/>
        <end position="64"/>
    </location>
</feature>
<feature type="transmembrane region" description="Helical" evidence="1">
    <location>
        <begin position="104"/>
        <end position="124"/>
    </location>
</feature>
<feature type="transmembrane region" description="Helical" evidence="1">
    <location>
        <begin position="140"/>
        <end position="160"/>
    </location>
</feature>
<feature type="transmembrane region" description="Helical" evidence="1">
    <location>
        <begin position="183"/>
        <end position="203"/>
    </location>
</feature>
<feature type="transmembrane region" description="Helical" evidence="1">
    <location>
        <begin position="210"/>
        <end position="230"/>
    </location>
</feature>
<feature type="transmembrane region" description="Helical" evidence="1">
    <location>
        <begin position="244"/>
        <end position="264"/>
    </location>
</feature>